<name>RF3_XYLF2</name>
<feature type="chain" id="PRO_1000092512" description="Peptide chain release factor 3">
    <location>
        <begin position="1"/>
        <end position="534"/>
    </location>
</feature>
<feature type="domain" description="tr-type G">
    <location>
        <begin position="9"/>
        <end position="278"/>
    </location>
</feature>
<feature type="binding site" evidence="1">
    <location>
        <begin position="18"/>
        <end position="25"/>
    </location>
    <ligand>
        <name>GTP</name>
        <dbReference type="ChEBI" id="CHEBI:37565"/>
    </ligand>
</feature>
<feature type="binding site" evidence="1">
    <location>
        <begin position="86"/>
        <end position="90"/>
    </location>
    <ligand>
        <name>GTP</name>
        <dbReference type="ChEBI" id="CHEBI:37565"/>
    </ligand>
</feature>
<feature type="binding site" evidence="1">
    <location>
        <begin position="140"/>
        <end position="143"/>
    </location>
    <ligand>
        <name>GTP</name>
        <dbReference type="ChEBI" id="CHEBI:37565"/>
    </ligand>
</feature>
<accession>B2I6P5</accession>
<reference key="1">
    <citation type="journal article" date="2010" name="J. Bacteriol.">
        <title>Whole genome sequences of two Xylella fastidiosa strains (M12 and M23) causing almond leaf scorch disease in California.</title>
        <authorList>
            <person name="Chen J."/>
            <person name="Xie G."/>
            <person name="Han S."/>
            <person name="Chertkov O."/>
            <person name="Sims D."/>
            <person name="Civerolo E.L."/>
        </authorList>
    </citation>
    <scope>NUCLEOTIDE SEQUENCE [LARGE SCALE GENOMIC DNA]</scope>
    <source>
        <strain>M23</strain>
    </source>
</reference>
<gene>
    <name evidence="1" type="primary">prfC</name>
    <name type="ordered locus">XfasM23_0130</name>
</gene>
<sequence>MSEVVAETARRRTFAIISHPDAGKTTLTEKLLLFGGAIQMAGSVKSRKAVRHATSDWMTLEKERGISVTSSVMQFPYEGKIINLLDTPGHADFGEDTYRVLTAVDSALMVIDVAKGVEERTIKLMEVCRLRDTPIMTFINKLDREGKNPIELLDEVERVLGIQCAPVTWPIGMGKRLRGVVNLLTNEVHLYEPGRNFTRQDSIIFTSLEAPGLAERIGEQMLADLHEELELIQGASACFDPTEYLGGRQTPVFFGSGVNNFGVQPLLDFFVEHAPSPQQRDTTSRVVLPTEEKLTGFVFKIQANMDPQHRDRVAFMRVCSGRFTAGMKAFHVRSSKDLKLANALTFMASDRESVAEAFPGDVIGIHNHGRVSIGDTFTEGEVLSFTGIPSFAPELFRRACLGDPLKLKQLQKGLTQLSEEGATQFFRPLMSNDLILGAVGMLQFDVVAYRLKNEYGVDATFEPVSITTARWVYCDNSKTLEEFREKNVTNLAVDASGELVYLAPTRVNLQLAQERAPEIHFFATREHAYAVGVD</sequence>
<dbReference type="EMBL" id="CP001011">
    <property type="protein sequence ID" value="ACB91587.1"/>
    <property type="molecule type" value="Genomic_DNA"/>
</dbReference>
<dbReference type="RefSeq" id="WP_004087188.1">
    <property type="nucleotide sequence ID" value="NC_010577.1"/>
</dbReference>
<dbReference type="SMR" id="B2I6P5"/>
<dbReference type="KEGG" id="xfn:XfasM23_0130"/>
<dbReference type="HOGENOM" id="CLU_002794_2_1_6"/>
<dbReference type="Proteomes" id="UP000001698">
    <property type="component" value="Chromosome"/>
</dbReference>
<dbReference type="GO" id="GO:0005829">
    <property type="term" value="C:cytosol"/>
    <property type="evidence" value="ECO:0007669"/>
    <property type="project" value="TreeGrafter"/>
</dbReference>
<dbReference type="GO" id="GO:0005525">
    <property type="term" value="F:GTP binding"/>
    <property type="evidence" value="ECO:0007669"/>
    <property type="project" value="UniProtKB-UniRule"/>
</dbReference>
<dbReference type="GO" id="GO:0003924">
    <property type="term" value="F:GTPase activity"/>
    <property type="evidence" value="ECO:0007669"/>
    <property type="project" value="InterPro"/>
</dbReference>
<dbReference type="GO" id="GO:0097216">
    <property type="term" value="F:guanosine tetraphosphate binding"/>
    <property type="evidence" value="ECO:0007669"/>
    <property type="project" value="UniProtKB-ARBA"/>
</dbReference>
<dbReference type="GO" id="GO:0016150">
    <property type="term" value="F:translation release factor activity, codon nonspecific"/>
    <property type="evidence" value="ECO:0007669"/>
    <property type="project" value="TreeGrafter"/>
</dbReference>
<dbReference type="GO" id="GO:0016149">
    <property type="term" value="F:translation release factor activity, codon specific"/>
    <property type="evidence" value="ECO:0007669"/>
    <property type="project" value="UniProtKB-UniRule"/>
</dbReference>
<dbReference type="GO" id="GO:0006449">
    <property type="term" value="P:regulation of translational termination"/>
    <property type="evidence" value="ECO:0007669"/>
    <property type="project" value="UniProtKB-UniRule"/>
</dbReference>
<dbReference type="CDD" id="cd04169">
    <property type="entry name" value="RF3"/>
    <property type="match status" value="1"/>
</dbReference>
<dbReference type="CDD" id="cd03689">
    <property type="entry name" value="RF3_II"/>
    <property type="match status" value="1"/>
</dbReference>
<dbReference type="CDD" id="cd16259">
    <property type="entry name" value="RF3_III"/>
    <property type="match status" value="1"/>
</dbReference>
<dbReference type="FunFam" id="3.30.70.3280:FF:000001">
    <property type="entry name" value="Peptide chain release factor 3"/>
    <property type="match status" value="1"/>
</dbReference>
<dbReference type="FunFam" id="3.40.50.300:FF:000542">
    <property type="entry name" value="Peptide chain release factor 3"/>
    <property type="match status" value="1"/>
</dbReference>
<dbReference type="Gene3D" id="3.40.50.300">
    <property type="entry name" value="P-loop containing nucleotide triphosphate hydrolases"/>
    <property type="match status" value="2"/>
</dbReference>
<dbReference type="Gene3D" id="3.30.70.3280">
    <property type="entry name" value="Peptide chain release factor 3, domain III"/>
    <property type="match status" value="1"/>
</dbReference>
<dbReference type="HAMAP" id="MF_00072">
    <property type="entry name" value="Rel_fac_3"/>
    <property type="match status" value="1"/>
</dbReference>
<dbReference type="InterPro" id="IPR053905">
    <property type="entry name" value="EF-G-like_DII"/>
</dbReference>
<dbReference type="InterPro" id="IPR035647">
    <property type="entry name" value="EFG_III/V"/>
</dbReference>
<dbReference type="InterPro" id="IPR031157">
    <property type="entry name" value="G_TR_CS"/>
</dbReference>
<dbReference type="InterPro" id="IPR027417">
    <property type="entry name" value="P-loop_NTPase"/>
</dbReference>
<dbReference type="InterPro" id="IPR004548">
    <property type="entry name" value="PrfC"/>
</dbReference>
<dbReference type="InterPro" id="IPR032090">
    <property type="entry name" value="RF3_C"/>
</dbReference>
<dbReference type="InterPro" id="IPR038467">
    <property type="entry name" value="RF3_dom_3_sf"/>
</dbReference>
<dbReference type="InterPro" id="IPR041732">
    <property type="entry name" value="RF3_GTP-bd"/>
</dbReference>
<dbReference type="InterPro" id="IPR005225">
    <property type="entry name" value="Small_GTP-bd"/>
</dbReference>
<dbReference type="InterPro" id="IPR000795">
    <property type="entry name" value="T_Tr_GTP-bd_dom"/>
</dbReference>
<dbReference type="InterPro" id="IPR009000">
    <property type="entry name" value="Transl_B-barrel_sf"/>
</dbReference>
<dbReference type="NCBIfam" id="TIGR00503">
    <property type="entry name" value="prfC"/>
    <property type="match status" value="1"/>
</dbReference>
<dbReference type="NCBIfam" id="NF001964">
    <property type="entry name" value="PRK00741.1"/>
    <property type="match status" value="1"/>
</dbReference>
<dbReference type="NCBIfam" id="TIGR00231">
    <property type="entry name" value="small_GTP"/>
    <property type="match status" value="1"/>
</dbReference>
<dbReference type="PANTHER" id="PTHR43556">
    <property type="entry name" value="PEPTIDE CHAIN RELEASE FACTOR RF3"/>
    <property type="match status" value="1"/>
</dbReference>
<dbReference type="PANTHER" id="PTHR43556:SF2">
    <property type="entry name" value="PEPTIDE CHAIN RELEASE FACTOR RF3"/>
    <property type="match status" value="1"/>
</dbReference>
<dbReference type="Pfam" id="PF22042">
    <property type="entry name" value="EF-G_D2"/>
    <property type="match status" value="1"/>
</dbReference>
<dbReference type="Pfam" id="PF00009">
    <property type="entry name" value="GTP_EFTU"/>
    <property type="match status" value="1"/>
</dbReference>
<dbReference type="Pfam" id="PF16658">
    <property type="entry name" value="RF3_C"/>
    <property type="match status" value="1"/>
</dbReference>
<dbReference type="PRINTS" id="PR00315">
    <property type="entry name" value="ELONGATNFCT"/>
</dbReference>
<dbReference type="SUPFAM" id="SSF54980">
    <property type="entry name" value="EF-G C-terminal domain-like"/>
    <property type="match status" value="1"/>
</dbReference>
<dbReference type="SUPFAM" id="SSF52540">
    <property type="entry name" value="P-loop containing nucleoside triphosphate hydrolases"/>
    <property type="match status" value="1"/>
</dbReference>
<dbReference type="SUPFAM" id="SSF50447">
    <property type="entry name" value="Translation proteins"/>
    <property type="match status" value="1"/>
</dbReference>
<dbReference type="PROSITE" id="PS00301">
    <property type="entry name" value="G_TR_1"/>
    <property type="match status" value="1"/>
</dbReference>
<dbReference type="PROSITE" id="PS51722">
    <property type="entry name" value="G_TR_2"/>
    <property type="match status" value="1"/>
</dbReference>
<protein>
    <recommendedName>
        <fullName evidence="1">Peptide chain release factor 3</fullName>
        <shortName evidence="1">RF-3</shortName>
    </recommendedName>
</protein>
<comment type="function">
    <text evidence="1">Increases the formation of ribosomal termination complexes and stimulates activities of RF-1 and RF-2. It binds guanine nucleotides and has strong preference for UGA stop codons. It may interact directly with the ribosome. The stimulation of RF-1 and RF-2 is significantly reduced by GTP and GDP, but not by GMP.</text>
</comment>
<comment type="subcellular location">
    <subcellularLocation>
        <location evidence="1">Cytoplasm</location>
    </subcellularLocation>
</comment>
<comment type="similarity">
    <text evidence="1">Belongs to the TRAFAC class translation factor GTPase superfamily. Classic translation factor GTPase family. PrfC subfamily.</text>
</comment>
<proteinExistence type="inferred from homology"/>
<evidence type="ECO:0000255" key="1">
    <source>
        <dbReference type="HAMAP-Rule" id="MF_00072"/>
    </source>
</evidence>
<keyword id="KW-0963">Cytoplasm</keyword>
<keyword id="KW-0342">GTP-binding</keyword>
<keyword id="KW-0547">Nucleotide-binding</keyword>
<keyword id="KW-0648">Protein biosynthesis</keyword>
<organism>
    <name type="scientific">Xylella fastidiosa (strain M23)</name>
    <dbReference type="NCBI Taxonomy" id="405441"/>
    <lineage>
        <taxon>Bacteria</taxon>
        <taxon>Pseudomonadati</taxon>
        <taxon>Pseudomonadota</taxon>
        <taxon>Gammaproteobacteria</taxon>
        <taxon>Lysobacterales</taxon>
        <taxon>Lysobacteraceae</taxon>
        <taxon>Xylella</taxon>
    </lineage>
</organism>